<comment type="catalytic activity">
    <reaction evidence="1">
        <text>(S)-4-amino-5-oxopentanoate = 5-aminolevulinate</text>
        <dbReference type="Rhea" id="RHEA:14265"/>
        <dbReference type="ChEBI" id="CHEBI:57501"/>
        <dbReference type="ChEBI" id="CHEBI:356416"/>
        <dbReference type="EC" id="5.4.3.8"/>
    </reaction>
</comment>
<comment type="cofactor">
    <cofactor evidence="1">
        <name>pyridoxal 5'-phosphate</name>
        <dbReference type="ChEBI" id="CHEBI:597326"/>
    </cofactor>
</comment>
<comment type="pathway">
    <text evidence="1">Porphyrin-containing compound metabolism; protoporphyrin-IX biosynthesis; 5-aminolevulinate from L-glutamyl-tRNA(Glu): step 2/2.</text>
</comment>
<comment type="subunit">
    <text evidence="1">Homodimer.</text>
</comment>
<comment type="subcellular location">
    <subcellularLocation>
        <location evidence="1">Cytoplasm</location>
    </subcellularLocation>
</comment>
<comment type="similarity">
    <text evidence="1">Belongs to the class-III pyridoxal-phosphate-dependent aminotransferase family. HemL subfamily.</text>
</comment>
<evidence type="ECO:0000255" key="1">
    <source>
        <dbReference type="HAMAP-Rule" id="MF_00375"/>
    </source>
</evidence>
<feature type="chain" id="PRO_0000243588" description="Glutamate-1-semialdehyde 2,1-aminomutase">
    <location>
        <begin position="1"/>
        <end position="435"/>
    </location>
</feature>
<feature type="modified residue" description="N6-(pyridoxal phosphate)lysine" evidence="1">
    <location>
        <position position="266"/>
    </location>
</feature>
<reference key="1">
    <citation type="journal article" date="2003" name="J. Bacteriol.">
        <title>Complete genome sequence of the ammonia-oxidizing bacterium and obligate chemolithoautotroph Nitrosomonas europaea.</title>
        <authorList>
            <person name="Chain P."/>
            <person name="Lamerdin J.E."/>
            <person name="Larimer F.W."/>
            <person name="Regala W."/>
            <person name="Lao V."/>
            <person name="Land M.L."/>
            <person name="Hauser L."/>
            <person name="Hooper A.B."/>
            <person name="Klotz M.G."/>
            <person name="Norton J."/>
            <person name="Sayavedra-Soto L.A."/>
            <person name="Arciero D.M."/>
            <person name="Hommes N.G."/>
            <person name="Whittaker M.M."/>
            <person name="Arp D.J."/>
        </authorList>
    </citation>
    <scope>NUCLEOTIDE SEQUENCE [LARGE SCALE GENOMIC DNA]</scope>
    <source>
        <strain>ATCC 19718 / CIP 103999 / KCTC 2705 / NBRC 14298</strain>
    </source>
</reference>
<keyword id="KW-0963">Cytoplasm</keyword>
<keyword id="KW-0413">Isomerase</keyword>
<keyword id="KW-0627">Porphyrin biosynthesis</keyword>
<keyword id="KW-0663">Pyridoxal phosphate</keyword>
<keyword id="KW-1185">Reference proteome</keyword>
<gene>
    <name evidence="1" type="primary">hemL</name>
    <name type="ordered locus">NE1423</name>
</gene>
<sequence length="435" mass="46402">MTITNQQLFERSRQYIPGGVNSPVRAFKSVGGTPVFFQRGQGAYFWDVEGKSYIDYVGSWGPLILGHAHPDVVRAVQIAAGHGTSFGAPTAAELEIAELLCRLLPSLEMVRLVSSGTEAGMSAIRLARGYTGRNRIIKFEGCYHGHDDALLVKAGSGALTFGHPSSAGVPAETAGHTLVLNYNDVAGVEETFSKMGTEIAAVIVEPVAGNMNLIKATSQFLETLRTLCTKHGSLLILDEVMTGFRVGLECAQGLYGIKPDLTILGKVIGGGLPMAAFGGRRDVMECLAPLGSVYQAGTLSGNPVAVAAGLETLHQIQVPGFFDKLSTMTRKLTEGLTAVAAKHSVAFCAQAVGGMFGLYFRKSPPESFAEVMESDREAFNHFFHAMLKEGVYFAPSAFEAGFVSAAHSNEEIDKTLAVADRIFGQGMRRTEKATL</sequence>
<organism>
    <name type="scientific">Nitrosomonas europaea (strain ATCC 19718 / CIP 103999 / KCTC 2705 / NBRC 14298)</name>
    <dbReference type="NCBI Taxonomy" id="228410"/>
    <lineage>
        <taxon>Bacteria</taxon>
        <taxon>Pseudomonadati</taxon>
        <taxon>Pseudomonadota</taxon>
        <taxon>Betaproteobacteria</taxon>
        <taxon>Nitrosomonadales</taxon>
        <taxon>Nitrosomonadaceae</taxon>
        <taxon>Nitrosomonas</taxon>
    </lineage>
</organism>
<protein>
    <recommendedName>
        <fullName evidence="1">Glutamate-1-semialdehyde 2,1-aminomutase</fullName>
        <shortName evidence="1">GSA</shortName>
        <ecNumber evidence="1">5.4.3.8</ecNumber>
    </recommendedName>
    <alternativeName>
        <fullName evidence="1">Glutamate-1-semialdehyde aminotransferase</fullName>
        <shortName evidence="1">GSA-AT</shortName>
    </alternativeName>
</protein>
<accession>Q82UQ8</accession>
<name>GSA_NITEU</name>
<dbReference type="EC" id="5.4.3.8" evidence="1"/>
<dbReference type="EMBL" id="AL954747">
    <property type="protein sequence ID" value="CAD85334.1"/>
    <property type="molecule type" value="Genomic_DNA"/>
</dbReference>
<dbReference type="RefSeq" id="WP_011111991.1">
    <property type="nucleotide sequence ID" value="NC_004757.1"/>
</dbReference>
<dbReference type="SMR" id="Q82UQ8"/>
<dbReference type="STRING" id="228410.NE1423"/>
<dbReference type="GeneID" id="87104597"/>
<dbReference type="KEGG" id="neu:NE1423"/>
<dbReference type="eggNOG" id="COG0001">
    <property type="taxonomic scope" value="Bacteria"/>
</dbReference>
<dbReference type="HOGENOM" id="CLU_016922_1_5_4"/>
<dbReference type="OrthoDB" id="3398487at2"/>
<dbReference type="PhylomeDB" id="Q82UQ8"/>
<dbReference type="UniPathway" id="UPA00251">
    <property type="reaction ID" value="UER00317"/>
</dbReference>
<dbReference type="Proteomes" id="UP000001416">
    <property type="component" value="Chromosome"/>
</dbReference>
<dbReference type="GO" id="GO:0005737">
    <property type="term" value="C:cytoplasm"/>
    <property type="evidence" value="ECO:0007669"/>
    <property type="project" value="UniProtKB-SubCell"/>
</dbReference>
<dbReference type="GO" id="GO:0042286">
    <property type="term" value="F:glutamate-1-semialdehyde 2,1-aminomutase activity"/>
    <property type="evidence" value="ECO:0007669"/>
    <property type="project" value="UniProtKB-UniRule"/>
</dbReference>
<dbReference type="GO" id="GO:0030170">
    <property type="term" value="F:pyridoxal phosphate binding"/>
    <property type="evidence" value="ECO:0007669"/>
    <property type="project" value="InterPro"/>
</dbReference>
<dbReference type="GO" id="GO:0008483">
    <property type="term" value="F:transaminase activity"/>
    <property type="evidence" value="ECO:0007669"/>
    <property type="project" value="InterPro"/>
</dbReference>
<dbReference type="GO" id="GO:0006782">
    <property type="term" value="P:protoporphyrinogen IX biosynthetic process"/>
    <property type="evidence" value="ECO:0007669"/>
    <property type="project" value="UniProtKB-UniRule"/>
</dbReference>
<dbReference type="CDD" id="cd00610">
    <property type="entry name" value="OAT_like"/>
    <property type="match status" value="1"/>
</dbReference>
<dbReference type="FunFam" id="3.40.640.10:FF:000021">
    <property type="entry name" value="Glutamate-1-semialdehyde 2,1-aminomutase"/>
    <property type="match status" value="1"/>
</dbReference>
<dbReference type="Gene3D" id="3.90.1150.10">
    <property type="entry name" value="Aspartate Aminotransferase, domain 1"/>
    <property type="match status" value="1"/>
</dbReference>
<dbReference type="Gene3D" id="3.40.640.10">
    <property type="entry name" value="Type I PLP-dependent aspartate aminotransferase-like (Major domain)"/>
    <property type="match status" value="1"/>
</dbReference>
<dbReference type="HAMAP" id="MF_00375">
    <property type="entry name" value="HemL_aminotrans_3"/>
    <property type="match status" value="1"/>
</dbReference>
<dbReference type="InterPro" id="IPR004639">
    <property type="entry name" value="4pyrrol_synth_GluAld_NH2Trfase"/>
</dbReference>
<dbReference type="InterPro" id="IPR005814">
    <property type="entry name" value="Aminotrans_3"/>
</dbReference>
<dbReference type="InterPro" id="IPR049704">
    <property type="entry name" value="Aminotrans_3_PPA_site"/>
</dbReference>
<dbReference type="InterPro" id="IPR015424">
    <property type="entry name" value="PyrdxlP-dep_Trfase"/>
</dbReference>
<dbReference type="InterPro" id="IPR015421">
    <property type="entry name" value="PyrdxlP-dep_Trfase_major"/>
</dbReference>
<dbReference type="InterPro" id="IPR015422">
    <property type="entry name" value="PyrdxlP-dep_Trfase_small"/>
</dbReference>
<dbReference type="NCBIfam" id="TIGR00713">
    <property type="entry name" value="hemL"/>
    <property type="match status" value="1"/>
</dbReference>
<dbReference type="NCBIfam" id="NF000818">
    <property type="entry name" value="PRK00062.1"/>
    <property type="match status" value="1"/>
</dbReference>
<dbReference type="PANTHER" id="PTHR43713">
    <property type="entry name" value="GLUTAMATE-1-SEMIALDEHYDE 2,1-AMINOMUTASE"/>
    <property type="match status" value="1"/>
</dbReference>
<dbReference type="PANTHER" id="PTHR43713:SF3">
    <property type="entry name" value="GLUTAMATE-1-SEMIALDEHYDE 2,1-AMINOMUTASE 1, CHLOROPLASTIC-RELATED"/>
    <property type="match status" value="1"/>
</dbReference>
<dbReference type="Pfam" id="PF00202">
    <property type="entry name" value="Aminotran_3"/>
    <property type="match status" value="1"/>
</dbReference>
<dbReference type="SUPFAM" id="SSF53383">
    <property type="entry name" value="PLP-dependent transferases"/>
    <property type="match status" value="1"/>
</dbReference>
<dbReference type="PROSITE" id="PS00600">
    <property type="entry name" value="AA_TRANSFER_CLASS_3"/>
    <property type="match status" value="1"/>
</dbReference>
<proteinExistence type="inferred from homology"/>